<reference key="1">
    <citation type="journal article" date="2001" name="Nature">
        <title>Genome sequence of enterohaemorrhagic Escherichia coli O157:H7.</title>
        <authorList>
            <person name="Perna N.T."/>
            <person name="Plunkett G. III"/>
            <person name="Burland V."/>
            <person name="Mau B."/>
            <person name="Glasner J.D."/>
            <person name="Rose D.J."/>
            <person name="Mayhew G.F."/>
            <person name="Evans P.S."/>
            <person name="Gregor J."/>
            <person name="Kirkpatrick H.A."/>
            <person name="Posfai G."/>
            <person name="Hackett J."/>
            <person name="Klink S."/>
            <person name="Boutin A."/>
            <person name="Shao Y."/>
            <person name="Miller L."/>
            <person name="Grotbeck E.J."/>
            <person name="Davis N.W."/>
            <person name="Lim A."/>
            <person name="Dimalanta E.T."/>
            <person name="Potamousis K."/>
            <person name="Apodaca J."/>
            <person name="Anantharaman T.S."/>
            <person name="Lin J."/>
            <person name="Yen G."/>
            <person name="Schwartz D.C."/>
            <person name="Welch R.A."/>
            <person name="Blattner F.R."/>
        </authorList>
    </citation>
    <scope>NUCLEOTIDE SEQUENCE [LARGE SCALE GENOMIC DNA]</scope>
    <source>
        <strain>O157:H7 / EDL933 / ATCC 700927 / EHEC</strain>
    </source>
</reference>
<reference key="2">
    <citation type="journal article" date="2001" name="DNA Res.">
        <title>Complete genome sequence of enterohemorrhagic Escherichia coli O157:H7 and genomic comparison with a laboratory strain K-12.</title>
        <authorList>
            <person name="Hayashi T."/>
            <person name="Makino K."/>
            <person name="Ohnishi M."/>
            <person name="Kurokawa K."/>
            <person name="Ishii K."/>
            <person name="Yokoyama K."/>
            <person name="Han C.-G."/>
            <person name="Ohtsubo E."/>
            <person name="Nakayama K."/>
            <person name="Murata T."/>
            <person name="Tanaka M."/>
            <person name="Tobe T."/>
            <person name="Iida T."/>
            <person name="Takami H."/>
            <person name="Honda T."/>
            <person name="Sasakawa C."/>
            <person name="Ogasawara N."/>
            <person name="Yasunaga T."/>
            <person name="Kuhara S."/>
            <person name="Shiba T."/>
            <person name="Hattori M."/>
            <person name="Shinagawa H."/>
        </authorList>
    </citation>
    <scope>NUCLEOTIDE SEQUENCE [LARGE SCALE GENOMIC DNA]</scope>
    <source>
        <strain>O157:H7 / Sakai / RIMD 0509952 / EHEC</strain>
    </source>
</reference>
<accession>Q8X7J5</accession>
<accession>Q7ACM3</accession>
<comment type="function">
    <text evidence="1">The MdtABC tripartite complex confers resistance against novobiocin and deoxycholate.</text>
</comment>
<comment type="subunit">
    <text evidence="1">Part of a tripartite efflux system composed of MdtA, MdtB and MdtC.</text>
</comment>
<comment type="subcellular location">
    <subcellularLocation>
        <location evidence="1">Cell inner membrane</location>
        <topology evidence="1">Peripheral membrane protein</topology>
    </subcellularLocation>
</comment>
<comment type="induction">
    <text evidence="1">The mdtABC operon is transcriptionally activated by BaeR.</text>
</comment>
<comment type="similarity">
    <text evidence="1">Belongs to the membrane fusion protein (MFP) (TC 8.A.1) family.</text>
</comment>
<comment type="sequence caution" evidence="3">
    <conflict type="erroneous initiation">
        <sequence resource="EMBL-CDS" id="AAG57137"/>
    </conflict>
    <text>Extended N-terminus.</text>
</comment>
<gene>
    <name evidence="1" type="primary">mdtA</name>
    <name type="ordered locus">Z3243</name>
    <name type="ordered locus">ECs2882</name>
</gene>
<organism>
    <name type="scientific">Escherichia coli O157:H7</name>
    <dbReference type="NCBI Taxonomy" id="83334"/>
    <lineage>
        <taxon>Bacteria</taxon>
        <taxon>Pseudomonadati</taxon>
        <taxon>Pseudomonadota</taxon>
        <taxon>Gammaproteobacteria</taxon>
        <taxon>Enterobacterales</taxon>
        <taxon>Enterobacteriaceae</taxon>
        <taxon>Escherichia</taxon>
    </lineage>
</organism>
<sequence length="415" mass="44498">MKGSYKSRWVIVIVVVIAAIAAFWFWQGRNDSQSAAPGATKQAQQSPAGGRRGMRSGPLAPVQAATAVEQAVPRYLTGLGTITAANTVTVRSRVDGQLMALHFQEGQQVKAGDLLAEIDPSQFKVALAQAQGQLAKDKATLTNARRDLARYQQLAKTNLVSRQELDAQQALVSETEGTIKADEASVASAQLQLDWSRITAPVDGRVGLKQVDVGNQISSGDTTGIVVITQTHPIDLLFTLPESDIATVVQAQKAGKPLVVEAWDRTNSKKLSEGTLLSLDNQIDATTGTIKVKARFNNQDDALFPNQFVNARMLVDTEQNAVVIPTAALQMGNEGHFVWVLNSENKVSKHLVTPGIQDSQKVVIRAGISAGDRVVTDGIDRLTEGAKVEVVEAQSATTPEEKATSREYAKKGARS</sequence>
<evidence type="ECO:0000255" key="1">
    <source>
        <dbReference type="HAMAP-Rule" id="MF_01422"/>
    </source>
</evidence>
<evidence type="ECO:0000256" key="2">
    <source>
        <dbReference type="SAM" id="MobiDB-lite"/>
    </source>
</evidence>
<evidence type="ECO:0000305" key="3"/>
<name>MDTA_ECO57</name>
<keyword id="KW-0997">Cell inner membrane</keyword>
<keyword id="KW-1003">Cell membrane</keyword>
<keyword id="KW-0472">Membrane</keyword>
<keyword id="KW-1185">Reference proteome</keyword>
<keyword id="KW-0732">Signal</keyword>
<keyword id="KW-0813">Transport</keyword>
<dbReference type="EMBL" id="AE005174">
    <property type="protein sequence ID" value="AAG57137.1"/>
    <property type="status" value="ALT_INIT"/>
    <property type="molecule type" value="Genomic_DNA"/>
</dbReference>
<dbReference type="EMBL" id="BA000007">
    <property type="protein sequence ID" value="BAB36305.2"/>
    <property type="molecule type" value="Genomic_DNA"/>
</dbReference>
<dbReference type="PIR" id="B90989">
    <property type="entry name" value="B90989"/>
</dbReference>
<dbReference type="PIR" id="E85834">
    <property type="entry name" value="E85834"/>
</dbReference>
<dbReference type="RefSeq" id="NP_310909.2">
    <property type="nucleotide sequence ID" value="NC_002695.1"/>
</dbReference>
<dbReference type="RefSeq" id="WP_000678969.1">
    <property type="nucleotide sequence ID" value="NZ_VOAI01000013.1"/>
</dbReference>
<dbReference type="SMR" id="Q8X7J5"/>
<dbReference type="STRING" id="155864.Z3243"/>
<dbReference type="GeneID" id="916584"/>
<dbReference type="KEGG" id="ece:Z3243"/>
<dbReference type="KEGG" id="ecs:ECs_2882"/>
<dbReference type="PATRIC" id="fig|386585.9.peg.3014"/>
<dbReference type="eggNOG" id="COG0845">
    <property type="taxonomic scope" value="Bacteria"/>
</dbReference>
<dbReference type="HOGENOM" id="CLU_018816_2_0_6"/>
<dbReference type="OMA" id="GQLMAIH"/>
<dbReference type="Proteomes" id="UP000000558">
    <property type="component" value="Chromosome"/>
</dbReference>
<dbReference type="Proteomes" id="UP000002519">
    <property type="component" value="Chromosome"/>
</dbReference>
<dbReference type="GO" id="GO:1990281">
    <property type="term" value="C:efflux pump complex"/>
    <property type="evidence" value="ECO:0007669"/>
    <property type="project" value="TreeGrafter"/>
</dbReference>
<dbReference type="GO" id="GO:0005886">
    <property type="term" value="C:plasma membrane"/>
    <property type="evidence" value="ECO:0007669"/>
    <property type="project" value="UniProtKB-SubCell"/>
</dbReference>
<dbReference type="GO" id="GO:0015562">
    <property type="term" value="F:efflux transmembrane transporter activity"/>
    <property type="evidence" value="ECO:0007669"/>
    <property type="project" value="TreeGrafter"/>
</dbReference>
<dbReference type="FunFam" id="2.40.420.20:FF:000001">
    <property type="entry name" value="Efflux RND transporter periplasmic adaptor subunit"/>
    <property type="match status" value="1"/>
</dbReference>
<dbReference type="FunFam" id="1.10.287.470:FF:000005">
    <property type="entry name" value="Multidrug resistance protein MdtA"/>
    <property type="match status" value="1"/>
</dbReference>
<dbReference type="FunFam" id="2.40.30.170:FF:000006">
    <property type="entry name" value="Multidrug resistance protein MdtA"/>
    <property type="match status" value="1"/>
</dbReference>
<dbReference type="Gene3D" id="2.40.30.170">
    <property type="match status" value="1"/>
</dbReference>
<dbReference type="Gene3D" id="2.40.420.20">
    <property type="match status" value="1"/>
</dbReference>
<dbReference type="Gene3D" id="2.40.50.100">
    <property type="match status" value="1"/>
</dbReference>
<dbReference type="Gene3D" id="1.10.287.470">
    <property type="entry name" value="Helix hairpin bin"/>
    <property type="match status" value="1"/>
</dbReference>
<dbReference type="HAMAP" id="MF_01422">
    <property type="entry name" value="MdtA"/>
    <property type="match status" value="1"/>
</dbReference>
<dbReference type="InterPro" id="IPR032317">
    <property type="entry name" value="CusB_D23"/>
</dbReference>
<dbReference type="InterPro" id="IPR022824">
    <property type="entry name" value="Multidrug-R_MdtA"/>
</dbReference>
<dbReference type="InterPro" id="IPR006143">
    <property type="entry name" value="RND_pump_MFP"/>
</dbReference>
<dbReference type="NCBIfam" id="NF008589">
    <property type="entry name" value="PRK11556.1"/>
    <property type="match status" value="1"/>
</dbReference>
<dbReference type="NCBIfam" id="TIGR01730">
    <property type="entry name" value="RND_mfp"/>
    <property type="match status" value="1"/>
</dbReference>
<dbReference type="PANTHER" id="PTHR30469">
    <property type="entry name" value="MULTIDRUG RESISTANCE PROTEIN MDTA"/>
    <property type="match status" value="1"/>
</dbReference>
<dbReference type="PANTHER" id="PTHR30469:SF12">
    <property type="entry name" value="MULTIDRUG RESISTANCE PROTEIN MDTA"/>
    <property type="match status" value="1"/>
</dbReference>
<dbReference type="Pfam" id="PF16576">
    <property type="entry name" value="HlyD_D23"/>
    <property type="match status" value="1"/>
</dbReference>
<dbReference type="SUPFAM" id="SSF111369">
    <property type="entry name" value="HlyD-like secretion proteins"/>
    <property type="match status" value="1"/>
</dbReference>
<protein>
    <recommendedName>
        <fullName evidence="1">Multidrug resistance protein MdtA</fullName>
    </recommendedName>
    <alternativeName>
        <fullName evidence="1">Multidrug transporter MdtA</fullName>
    </alternativeName>
</protein>
<feature type="signal peptide" evidence="1">
    <location>
        <begin position="1"/>
        <end position="21"/>
    </location>
</feature>
<feature type="chain" id="PRO_0000018700" description="Multidrug resistance protein MdtA">
    <location>
        <begin position="22"/>
        <end position="415"/>
    </location>
</feature>
<feature type="region of interest" description="Disordered" evidence="2">
    <location>
        <begin position="31"/>
        <end position="60"/>
    </location>
</feature>
<feature type="region of interest" description="Disordered" evidence="2">
    <location>
        <begin position="392"/>
        <end position="415"/>
    </location>
</feature>
<feature type="compositionally biased region" description="Polar residues" evidence="2">
    <location>
        <begin position="31"/>
        <end position="47"/>
    </location>
</feature>
<feature type="compositionally biased region" description="Basic and acidic residues" evidence="2">
    <location>
        <begin position="399"/>
        <end position="415"/>
    </location>
</feature>
<proteinExistence type="inferred from homology"/>